<comment type="function">
    <text evidence="1">Specifically methylates guanosine-37 in various tRNAs.</text>
</comment>
<comment type="catalytic activity">
    <reaction evidence="1">
        <text>guanosine(37) in tRNA + S-adenosyl-L-methionine = N(1)-methylguanosine(37) in tRNA + S-adenosyl-L-homocysteine + H(+)</text>
        <dbReference type="Rhea" id="RHEA:36899"/>
        <dbReference type="Rhea" id="RHEA-COMP:10145"/>
        <dbReference type="Rhea" id="RHEA-COMP:10147"/>
        <dbReference type="ChEBI" id="CHEBI:15378"/>
        <dbReference type="ChEBI" id="CHEBI:57856"/>
        <dbReference type="ChEBI" id="CHEBI:59789"/>
        <dbReference type="ChEBI" id="CHEBI:73542"/>
        <dbReference type="ChEBI" id="CHEBI:74269"/>
        <dbReference type="EC" id="2.1.1.228"/>
    </reaction>
</comment>
<comment type="subunit">
    <text evidence="1">Homodimer.</text>
</comment>
<comment type="subcellular location">
    <subcellularLocation>
        <location evidence="1">Cytoplasm</location>
    </subcellularLocation>
</comment>
<comment type="similarity">
    <text evidence="1">Belongs to the RNA methyltransferase TrmD family.</text>
</comment>
<organism>
    <name type="scientific">Rickettsia africae (strain ESF-5)</name>
    <dbReference type="NCBI Taxonomy" id="347255"/>
    <lineage>
        <taxon>Bacteria</taxon>
        <taxon>Pseudomonadati</taxon>
        <taxon>Pseudomonadota</taxon>
        <taxon>Alphaproteobacteria</taxon>
        <taxon>Rickettsiales</taxon>
        <taxon>Rickettsiaceae</taxon>
        <taxon>Rickettsieae</taxon>
        <taxon>Rickettsia</taxon>
        <taxon>spotted fever group</taxon>
    </lineage>
</organism>
<evidence type="ECO:0000255" key="1">
    <source>
        <dbReference type="HAMAP-Rule" id="MF_00605"/>
    </source>
</evidence>
<protein>
    <recommendedName>
        <fullName evidence="1">tRNA (guanine-N(1)-)-methyltransferase</fullName>
        <ecNumber evidence="1">2.1.1.228</ecNumber>
    </recommendedName>
    <alternativeName>
        <fullName evidence="1">M1G-methyltransferase</fullName>
    </alternativeName>
    <alternativeName>
        <fullName evidence="1">tRNA [GM37] methyltransferase</fullName>
    </alternativeName>
</protein>
<dbReference type="EC" id="2.1.1.228" evidence="1"/>
<dbReference type="EMBL" id="CP001612">
    <property type="protein sequence ID" value="ACP53107.1"/>
    <property type="molecule type" value="Genomic_DNA"/>
</dbReference>
<dbReference type="RefSeq" id="WP_004996686.1">
    <property type="nucleotide sequence ID" value="NC_012633.1"/>
</dbReference>
<dbReference type="SMR" id="C3PME7"/>
<dbReference type="GeneID" id="95361868"/>
<dbReference type="KEGG" id="raf:RAF_ORF0140"/>
<dbReference type="HOGENOM" id="CLU_047363_0_1_5"/>
<dbReference type="Proteomes" id="UP000002305">
    <property type="component" value="Chromosome"/>
</dbReference>
<dbReference type="GO" id="GO:0005829">
    <property type="term" value="C:cytosol"/>
    <property type="evidence" value="ECO:0007669"/>
    <property type="project" value="TreeGrafter"/>
</dbReference>
<dbReference type="GO" id="GO:0052906">
    <property type="term" value="F:tRNA (guanine(37)-N1)-methyltransferase activity"/>
    <property type="evidence" value="ECO:0007669"/>
    <property type="project" value="UniProtKB-UniRule"/>
</dbReference>
<dbReference type="GO" id="GO:0002939">
    <property type="term" value="P:tRNA N1-guanine methylation"/>
    <property type="evidence" value="ECO:0007669"/>
    <property type="project" value="TreeGrafter"/>
</dbReference>
<dbReference type="CDD" id="cd18080">
    <property type="entry name" value="TrmD-like"/>
    <property type="match status" value="1"/>
</dbReference>
<dbReference type="Gene3D" id="3.40.1280.10">
    <property type="match status" value="1"/>
</dbReference>
<dbReference type="Gene3D" id="1.10.1270.20">
    <property type="entry name" value="tRNA(m1g37)methyltransferase, domain 2"/>
    <property type="match status" value="1"/>
</dbReference>
<dbReference type="HAMAP" id="MF_00605">
    <property type="entry name" value="TrmD"/>
    <property type="match status" value="1"/>
</dbReference>
<dbReference type="InterPro" id="IPR029028">
    <property type="entry name" value="Alpha/beta_knot_MTases"/>
</dbReference>
<dbReference type="InterPro" id="IPR023148">
    <property type="entry name" value="tRNA_m1G_MeTrfase_C_sf"/>
</dbReference>
<dbReference type="InterPro" id="IPR002649">
    <property type="entry name" value="tRNA_m1G_MeTrfase_TrmD"/>
</dbReference>
<dbReference type="InterPro" id="IPR029026">
    <property type="entry name" value="tRNA_m1G_MTases_N"/>
</dbReference>
<dbReference type="InterPro" id="IPR016009">
    <property type="entry name" value="tRNA_MeTrfase_TRMD/TRM10"/>
</dbReference>
<dbReference type="NCBIfam" id="NF000648">
    <property type="entry name" value="PRK00026.1"/>
    <property type="match status" value="1"/>
</dbReference>
<dbReference type="NCBIfam" id="TIGR00088">
    <property type="entry name" value="trmD"/>
    <property type="match status" value="1"/>
</dbReference>
<dbReference type="PANTHER" id="PTHR46417">
    <property type="entry name" value="TRNA (GUANINE-N(1)-)-METHYLTRANSFERASE"/>
    <property type="match status" value="1"/>
</dbReference>
<dbReference type="PANTHER" id="PTHR46417:SF1">
    <property type="entry name" value="TRNA (GUANINE-N(1)-)-METHYLTRANSFERASE"/>
    <property type="match status" value="1"/>
</dbReference>
<dbReference type="Pfam" id="PF01746">
    <property type="entry name" value="tRNA_m1G_MT"/>
    <property type="match status" value="1"/>
</dbReference>
<dbReference type="PIRSF" id="PIRSF000386">
    <property type="entry name" value="tRNA_mtase"/>
    <property type="match status" value="1"/>
</dbReference>
<dbReference type="SUPFAM" id="SSF75217">
    <property type="entry name" value="alpha/beta knot"/>
    <property type="match status" value="1"/>
</dbReference>
<reference key="1">
    <citation type="journal article" date="2009" name="BMC Genomics">
        <title>Analysis of the Rickettsia africae genome reveals that virulence acquisition in Rickettsia species may be explained by genome reduction.</title>
        <authorList>
            <person name="Fournier P.-E."/>
            <person name="El Karkouri K."/>
            <person name="Leroy Q."/>
            <person name="Robert C."/>
            <person name="Giumelli B."/>
            <person name="Renesto P."/>
            <person name="Socolovschi C."/>
            <person name="Parola P."/>
            <person name="Audic S."/>
            <person name="Raoult D."/>
        </authorList>
    </citation>
    <scope>NUCLEOTIDE SEQUENCE [LARGE SCALE GENOMIC DNA]</scope>
    <source>
        <strain>ESF-5</strain>
    </source>
</reference>
<proteinExistence type="inferred from homology"/>
<sequence length="234" mass="26412">MSILHATILTVFPEMFPGTLGHSLAGQALNKNIWSYDVINIRDFGLTKHKNIDDEAYGGGNGLIMRPDVLGSSIDHALALNPNAEMYYPSPRGRVFTQSFAKEMLKNKNLIFLCGRYEGIDERVIEEYNVKEISVGDYILSGGEIPTLTILDCLIRLLPGVLMNQNTLSSESFEEDGEFKGGLECSLYTRPEIWRDRAVPSVLLSGNHRLINEWKKEQSHMITKLRRPELLKDL</sequence>
<name>TRMD_RICAE</name>
<feature type="chain" id="PRO_1000212232" description="tRNA (guanine-N(1)-)-methyltransferase">
    <location>
        <begin position="1"/>
        <end position="234"/>
    </location>
</feature>
<feature type="binding site" evidence="1">
    <location>
        <position position="115"/>
    </location>
    <ligand>
        <name>S-adenosyl-L-methionine</name>
        <dbReference type="ChEBI" id="CHEBI:59789"/>
    </ligand>
</feature>
<feature type="binding site" evidence="1">
    <location>
        <begin position="135"/>
        <end position="140"/>
    </location>
    <ligand>
        <name>S-adenosyl-L-methionine</name>
        <dbReference type="ChEBI" id="CHEBI:59789"/>
    </ligand>
</feature>
<gene>
    <name evidence="1" type="primary">trmD</name>
    <name type="ordered locus">RAF_ORF0140</name>
</gene>
<accession>C3PME7</accession>
<keyword id="KW-0963">Cytoplasm</keyword>
<keyword id="KW-0489">Methyltransferase</keyword>
<keyword id="KW-0949">S-adenosyl-L-methionine</keyword>
<keyword id="KW-0808">Transferase</keyword>
<keyword id="KW-0819">tRNA processing</keyword>